<protein>
    <recommendedName>
        <fullName evidence="1">Phosphoenolpyruvate carboxykinase [GTP]</fullName>
        <shortName evidence="1">PEP carboxykinase</shortName>
        <shortName evidence="1">PEPCK</shortName>
        <ecNumber evidence="1">4.1.1.32</ecNumber>
    </recommendedName>
</protein>
<feature type="chain" id="PRO_0000103596" description="Phosphoenolpyruvate carboxykinase [GTP]">
    <location>
        <begin position="1"/>
        <end position="600"/>
    </location>
</feature>
<feature type="active site" evidence="1">
    <location>
        <position position="269"/>
    </location>
</feature>
<feature type="binding site" evidence="1">
    <location>
        <position position="76"/>
    </location>
    <ligand>
        <name>substrate</name>
    </ligand>
</feature>
<feature type="binding site" evidence="1">
    <location>
        <begin position="216"/>
        <end position="218"/>
    </location>
    <ligand>
        <name>substrate</name>
    </ligand>
</feature>
<feature type="binding site" evidence="1">
    <location>
        <position position="225"/>
    </location>
    <ligand>
        <name>Mn(2+)</name>
        <dbReference type="ChEBI" id="CHEBI:29035"/>
    </ligand>
</feature>
<feature type="binding site" evidence="1">
    <location>
        <position position="245"/>
    </location>
    <ligand>
        <name>Mn(2+)</name>
        <dbReference type="ChEBI" id="CHEBI:29035"/>
    </ligand>
</feature>
<feature type="binding site" evidence="1">
    <location>
        <position position="267"/>
    </location>
    <ligand>
        <name>substrate</name>
    </ligand>
</feature>
<feature type="binding site" evidence="1">
    <location>
        <begin position="268"/>
        <end position="273"/>
    </location>
    <ligand>
        <name>GTP</name>
        <dbReference type="ChEBI" id="CHEBI:37565"/>
    </ligand>
</feature>
<feature type="binding site" evidence="1">
    <location>
        <position position="292"/>
    </location>
    <ligand>
        <name>Mn(2+)</name>
        <dbReference type="ChEBI" id="CHEBI:29035"/>
    </ligand>
</feature>
<feature type="binding site" evidence="1">
    <location>
        <begin position="381"/>
        <end position="383"/>
    </location>
    <ligand>
        <name>substrate</name>
    </ligand>
</feature>
<feature type="binding site" evidence="1">
    <location>
        <position position="383"/>
    </location>
    <ligand>
        <name>GTP</name>
        <dbReference type="ChEBI" id="CHEBI:37565"/>
    </ligand>
</feature>
<feature type="binding site" evidence="1">
    <location>
        <position position="414"/>
    </location>
    <ligand>
        <name>GTP</name>
        <dbReference type="ChEBI" id="CHEBI:37565"/>
    </ligand>
</feature>
<feature type="binding site" evidence="1">
    <location>
        <begin position="508"/>
        <end position="511"/>
    </location>
    <ligand>
        <name>GTP</name>
        <dbReference type="ChEBI" id="CHEBI:37565"/>
    </ligand>
</feature>
<accession>Q821M4</accession>
<dbReference type="EC" id="4.1.1.32" evidence="1"/>
<dbReference type="EMBL" id="AE015925">
    <property type="protein sequence ID" value="AAP05655.1"/>
    <property type="molecule type" value="Genomic_DNA"/>
</dbReference>
<dbReference type="RefSeq" id="WP_011006869.1">
    <property type="nucleotide sequence ID" value="NC_003361.3"/>
</dbReference>
<dbReference type="SMR" id="Q821M4"/>
<dbReference type="STRING" id="227941.CCA_00916"/>
<dbReference type="KEGG" id="cca:CCA_00916"/>
<dbReference type="eggNOG" id="COG1274">
    <property type="taxonomic scope" value="Bacteria"/>
</dbReference>
<dbReference type="HOGENOM" id="CLU_028872_1_1_0"/>
<dbReference type="OrthoDB" id="9758871at2"/>
<dbReference type="UniPathway" id="UPA00138"/>
<dbReference type="Proteomes" id="UP000002193">
    <property type="component" value="Chromosome"/>
</dbReference>
<dbReference type="GO" id="GO:0005829">
    <property type="term" value="C:cytosol"/>
    <property type="evidence" value="ECO:0007669"/>
    <property type="project" value="TreeGrafter"/>
</dbReference>
<dbReference type="GO" id="GO:0005525">
    <property type="term" value="F:GTP binding"/>
    <property type="evidence" value="ECO:0007669"/>
    <property type="project" value="UniProtKB-UniRule"/>
</dbReference>
<dbReference type="GO" id="GO:0030145">
    <property type="term" value="F:manganese ion binding"/>
    <property type="evidence" value="ECO:0007669"/>
    <property type="project" value="UniProtKB-UniRule"/>
</dbReference>
<dbReference type="GO" id="GO:0004613">
    <property type="term" value="F:phosphoenolpyruvate carboxykinase (GTP) activity"/>
    <property type="evidence" value="ECO:0007669"/>
    <property type="project" value="UniProtKB-UniRule"/>
</dbReference>
<dbReference type="GO" id="GO:0071333">
    <property type="term" value="P:cellular response to glucose stimulus"/>
    <property type="evidence" value="ECO:0007669"/>
    <property type="project" value="TreeGrafter"/>
</dbReference>
<dbReference type="GO" id="GO:0006094">
    <property type="term" value="P:gluconeogenesis"/>
    <property type="evidence" value="ECO:0007669"/>
    <property type="project" value="UniProtKB-UniRule"/>
</dbReference>
<dbReference type="GO" id="GO:0046327">
    <property type="term" value="P:glycerol biosynthetic process from pyruvate"/>
    <property type="evidence" value="ECO:0007669"/>
    <property type="project" value="TreeGrafter"/>
</dbReference>
<dbReference type="GO" id="GO:0006107">
    <property type="term" value="P:oxaloacetate metabolic process"/>
    <property type="evidence" value="ECO:0007669"/>
    <property type="project" value="TreeGrafter"/>
</dbReference>
<dbReference type="GO" id="GO:0019543">
    <property type="term" value="P:propionate catabolic process"/>
    <property type="evidence" value="ECO:0007669"/>
    <property type="project" value="TreeGrafter"/>
</dbReference>
<dbReference type="GO" id="GO:0033993">
    <property type="term" value="P:response to lipid"/>
    <property type="evidence" value="ECO:0007669"/>
    <property type="project" value="TreeGrafter"/>
</dbReference>
<dbReference type="GO" id="GO:0042594">
    <property type="term" value="P:response to starvation"/>
    <property type="evidence" value="ECO:0007669"/>
    <property type="project" value="TreeGrafter"/>
</dbReference>
<dbReference type="CDD" id="cd00819">
    <property type="entry name" value="PEPCK_GTP"/>
    <property type="match status" value="1"/>
</dbReference>
<dbReference type="FunFam" id="3.40.449.10:FF:000005">
    <property type="entry name" value="Phosphoenolpyruvate carboxykinase [GTP]"/>
    <property type="match status" value="1"/>
</dbReference>
<dbReference type="Gene3D" id="3.90.228.20">
    <property type="match status" value="1"/>
</dbReference>
<dbReference type="Gene3D" id="3.40.449.10">
    <property type="entry name" value="Phosphoenolpyruvate Carboxykinase, domain 1"/>
    <property type="match status" value="1"/>
</dbReference>
<dbReference type="Gene3D" id="2.170.8.10">
    <property type="entry name" value="Phosphoenolpyruvate Carboxykinase, domain 2"/>
    <property type="match status" value="1"/>
</dbReference>
<dbReference type="HAMAP" id="MF_00452">
    <property type="entry name" value="PEPCK_GTP"/>
    <property type="match status" value="1"/>
</dbReference>
<dbReference type="InterPro" id="IPR018091">
    <property type="entry name" value="PEP_carboxykin_GTP_CS"/>
</dbReference>
<dbReference type="InterPro" id="IPR013035">
    <property type="entry name" value="PEP_carboxykinase_C"/>
</dbReference>
<dbReference type="InterPro" id="IPR008209">
    <property type="entry name" value="PEP_carboxykinase_GTP"/>
</dbReference>
<dbReference type="InterPro" id="IPR035077">
    <property type="entry name" value="PEP_carboxykinase_GTP_C"/>
</dbReference>
<dbReference type="InterPro" id="IPR035078">
    <property type="entry name" value="PEP_carboxykinase_GTP_N"/>
</dbReference>
<dbReference type="InterPro" id="IPR008210">
    <property type="entry name" value="PEP_carboxykinase_N"/>
</dbReference>
<dbReference type="NCBIfam" id="NF003253">
    <property type="entry name" value="PRK04210.1"/>
    <property type="match status" value="1"/>
</dbReference>
<dbReference type="PANTHER" id="PTHR11561">
    <property type="entry name" value="PHOSPHOENOLPYRUVATE CARBOXYKINASE"/>
    <property type="match status" value="1"/>
</dbReference>
<dbReference type="PANTHER" id="PTHR11561:SF0">
    <property type="entry name" value="PHOSPHOENOLPYRUVATE CARBOXYKINASE [GTP]-RELATED"/>
    <property type="match status" value="1"/>
</dbReference>
<dbReference type="Pfam" id="PF00821">
    <property type="entry name" value="PEPCK_GTP"/>
    <property type="match status" value="1"/>
</dbReference>
<dbReference type="Pfam" id="PF17297">
    <property type="entry name" value="PEPCK_N"/>
    <property type="match status" value="1"/>
</dbReference>
<dbReference type="PIRSF" id="PIRSF001348">
    <property type="entry name" value="PEP_carboxykinase_GTP"/>
    <property type="match status" value="1"/>
</dbReference>
<dbReference type="SUPFAM" id="SSF68923">
    <property type="entry name" value="PEP carboxykinase N-terminal domain"/>
    <property type="match status" value="1"/>
</dbReference>
<dbReference type="SUPFAM" id="SSF53795">
    <property type="entry name" value="PEP carboxykinase-like"/>
    <property type="match status" value="1"/>
</dbReference>
<dbReference type="PROSITE" id="PS00505">
    <property type="entry name" value="PEPCK_GTP"/>
    <property type="match status" value="1"/>
</dbReference>
<evidence type="ECO:0000255" key="1">
    <source>
        <dbReference type="HAMAP-Rule" id="MF_00452"/>
    </source>
</evidence>
<proteinExistence type="inferred from homology"/>
<reference key="1">
    <citation type="journal article" date="2003" name="Nucleic Acids Res.">
        <title>Genome sequence of Chlamydophila caviae (Chlamydia psittaci GPIC): examining the role of niche-specific genes in the evolution of the Chlamydiaceae.</title>
        <authorList>
            <person name="Read T.D."/>
            <person name="Myers G.S.A."/>
            <person name="Brunham R.C."/>
            <person name="Nelson W.C."/>
            <person name="Paulsen I.T."/>
            <person name="Heidelberg J.F."/>
            <person name="Holtzapple E.K."/>
            <person name="Khouri H.M."/>
            <person name="Federova N.B."/>
            <person name="Carty H.A."/>
            <person name="Umayam L.A."/>
            <person name="Haft D.H."/>
            <person name="Peterson J.D."/>
            <person name="Beanan M.J."/>
            <person name="White O."/>
            <person name="Salzberg S.L."/>
            <person name="Hsia R.-C."/>
            <person name="McClarty G."/>
            <person name="Rank R.G."/>
            <person name="Bavoil P.M."/>
            <person name="Fraser C.M."/>
        </authorList>
    </citation>
    <scope>NUCLEOTIDE SEQUENCE [LARGE SCALE GENOMIC DNA]</scope>
    <source>
        <strain>ATCC VR-813 / DSM 19441 / 03DC25 / GPIC</strain>
    </source>
</reference>
<sequence>MTSAWSSEIQHEGLKQWIQEVAELVTPDDIRICNGSDSEYAEVYGIMEKSGVAIPLNPDVHPNCFLVRSSPEDVARVEQFTFICTTKKEDAGPTNNWRDPQEMRQELQGLFRGCMRGRTLYVIPFCMGPLNSPFSLIGVELTDSPYVVCSMKIMTRMGAEVLKSLGTTGSFHKCLHSVGAPLSPGEKDVAWPCNPKNMRIVHFQDDSSVMSFGSGYGGNALLGKKSVALRLASYIARSQGWLAEHMLIIGVTNPEGQKKYFAASFPSACGKTNLAMLMPKIPGWEVECIGDDIAWIRPGPDGRLYAVNPEFGFFGVAPGTSETTNPNALATCKTNSVFTNVALTPDGNVWWEGLTSQPPEGLIDWRGNPWQPGGAPAAHPNSRFTAPVKQCPVLDPQWNSPEGVPIEAIIFGGRRSETIPLVYEALSWQHGVTIGASMSSATTAAIVGEQGKLRHDPFAMLPFCGYNMAHYFDHWLSFASNTSLKLPKIYGVNWFRKDKDGNFIWPGFSDNLRVIEWIFRRTNGEESIAKKTPIGYLPEESSLNLEGLNLSSQALQDLLSVDVSGWLKEVANVREYCKIFGSDLPQTITDELFRIERELK</sequence>
<gene>
    <name evidence="1" type="primary">pckG</name>
    <name type="synonym">pckA</name>
    <name type="ordered locus">CCA_00916</name>
</gene>
<organism>
    <name type="scientific">Chlamydia caviae (strain ATCC VR-813 / DSM 19441 / 03DC25 / GPIC)</name>
    <name type="common">Chlamydophila caviae</name>
    <dbReference type="NCBI Taxonomy" id="227941"/>
    <lineage>
        <taxon>Bacteria</taxon>
        <taxon>Pseudomonadati</taxon>
        <taxon>Chlamydiota</taxon>
        <taxon>Chlamydiia</taxon>
        <taxon>Chlamydiales</taxon>
        <taxon>Chlamydiaceae</taxon>
        <taxon>Chlamydia/Chlamydophila group</taxon>
        <taxon>Chlamydia</taxon>
    </lineage>
</organism>
<keyword id="KW-0963">Cytoplasm</keyword>
<keyword id="KW-0210">Decarboxylase</keyword>
<keyword id="KW-0312">Gluconeogenesis</keyword>
<keyword id="KW-0342">GTP-binding</keyword>
<keyword id="KW-0456">Lyase</keyword>
<keyword id="KW-0464">Manganese</keyword>
<keyword id="KW-0479">Metal-binding</keyword>
<keyword id="KW-0547">Nucleotide-binding</keyword>
<comment type="function">
    <text evidence="1">Catalyzes the conversion of oxaloacetate (OAA) to phosphoenolpyruvate (PEP), the rate-limiting step in the metabolic pathway that produces glucose from lactate and other precursors derived from the citric acid cycle.</text>
</comment>
<comment type="catalytic activity">
    <reaction evidence="1">
        <text>oxaloacetate + GTP = phosphoenolpyruvate + GDP + CO2</text>
        <dbReference type="Rhea" id="RHEA:10388"/>
        <dbReference type="ChEBI" id="CHEBI:16452"/>
        <dbReference type="ChEBI" id="CHEBI:16526"/>
        <dbReference type="ChEBI" id="CHEBI:37565"/>
        <dbReference type="ChEBI" id="CHEBI:58189"/>
        <dbReference type="ChEBI" id="CHEBI:58702"/>
        <dbReference type="EC" id="4.1.1.32"/>
    </reaction>
</comment>
<comment type="cofactor">
    <cofactor evidence="1">
        <name>Mn(2+)</name>
        <dbReference type="ChEBI" id="CHEBI:29035"/>
    </cofactor>
    <text evidence="1">Binds 1 Mn(2+) ion per subunit.</text>
</comment>
<comment type="pathway">
    <text evidence="1">Carbohydrate biosynthesis; gluconeogenesis.</text>
</comment>
<comment type="subunit">
    <text evidence="1">Monomer.</text>
</comment>
<comment type="subcellular location">
    <subcellularLocation>
        <location evidence="1">Cytoplasm</location>
    </subcellularLocation>
</comment>
<comment type="similarity">
    <text evidence="1">Belongs to the phosphoenolpyruvate carboxykinase [GTP] family.</text>
</comment>
<name>PCKG_CHLCV</name>